<comment type="function">
    <text evidence="1">Probable component of the endoplasmic reticulum-associated degradation (ERAD) pathway.</text>
</comment>
<comment type="similarity">
    <text evidence="3">Belongs to the LCL2 family.</text>
</comment>
<comment type="sequence caution" evidence="3">
    <conflict type="erroneous gene model prediction">
        <sequence resource="EMBL-CDS" id="OAT04779"/>
    </conflict>
</comment>
<organism>
    <name type="scientific">Blastomyces gilchristii (strain SLH14081)</name>
    <name type="common">Blastomyces dermatitidis</name>
    <dbReference type="NCBI Taxonomy" id="559298"/>
    <lineage>
        <taxon>Eukaryota</taxon>
        <taxon>Fungi</taxon>
        <taxon>Dikarya</taxon>
        <taxon>Ascomycota</taxon>
        <taxon>Pezizomycotina</taxon>
        <taxon>Eurotiomycetes</taxon>
        <taxon>Eurotiomycetidae</taxon>
        <taxon>Onygenales</taxon>
        <taxon>Ajellomycetaceae</taxon>
        <taxon>Blastomyces</taxon>
    </lineage>
</organism>
<keyword id="KW-1185">Reference proteome</keyword>
<keyword id="KW-0732">Signal</keyword>
<dbReference type="EMBL" id="GG657449">
    <property type="protein sequence ID" value="OAT04779.1"/>
    <property type="status" value="ALT_SEQ"/>
    <property type="molecule type" value="Genomic_DNA"/>
</dbReference>
<dbReference type="RefSeq" id="XP_002628368.1">
    <property type="nucleotide sequence ID" value="XM_002628322.1"/>
</dbReference>
<dbReference type="SMR" id="C5JF45"/>
<dbReference type="STRING" id="559298.C5JF45"/>
<dbReference type="HOGENOM" id="CLU_142363_0_0_1"/>
<dbReference type="OrthoDB" id="2234316at2759"/>
<dbReference type="Proteomes" id="UP000002038">
    <property type="component" value="Unassembled WGS sequence"/>
</dbReference>
<dbReference type="GO" id="GO:0036503">
    <property type="term" value="P:ERAD pathway"/>
    <property type="evidence" value="ECO:0007669"/>
    <property type="project" value="TreeGrafter"/>
</dbReference>
<dbReference type="CDD" id="cd23996">
    <property type="entry name" value="LCL2-like"/>
    <property type="match status" value="1"/>
</dbReference>
<dbReference type="InterPro" id="IPR034543">
    <property type="entry name" value="LCL2"/>
</dbReference>
<dbReference type="PANTHER" id="PTHR38425">
    <property type="entry name" value="LONG CHRONOLOGICAL LIFESPAN PROTEIN 2"/>
    <property type="match status" value="1"/>
</dbReference>
<dbReference type="PANTHER" id="PTHR38425:SF1">
    <property type="entry name" value="LONG CHRONOLOGICAL LIFESPAN PROTEIN 2"/>
    <property type="match status" value="1"/>
</dbReference>
<feature type="signal peptide" evidence="2">
    <location>
        <begin position="1"/>
        <end position="21"/>
    </location>
</feature>
<feature type="chain" id="PRO_0000408587" description="Long chronological lifespan protein 2">
    <location>
        <begin position="22"/>
        <end position="121"/>
    </location>
</feature>
<accession>C5JF45</accession>
<accession>A0A179UBW4</accession>
<reference key="1">
    <citation type="journal article" date="2015" name="PLoS Genet.">
        <title>The dynamic genome and transcriptome of the human fungal pathogen Blastomyces and close relative Emmonsia.</title>
        <authorList>
            <person name="Munoz J.F."/>
            <person name="Gauthier G.M."/>
            <person name="Desjardins C.A."/>
            <person name="Gallo J.E."/>
            <person name="Holder J."/>
            <person name="Sullivan T.D."/>
            <person name="Marty A.J."/>
            <person name="Carmen J.C."/>
            <person name="Chen Z."/>
            <person name="Ding L."/>
            <person name="Gujja S."/>
            <person name="Magrini V."/>
            <person name="Misas E."/>
            <person name="Mitreva M."/>
            <person name="Priest M."/>
            <person name="Saif S."/>
            <person name="Whiston E.A."/>
            <person name="Young S."/>
            <person name="Zeng Q."/>
            <person name="Goldman W.E."/>
            <person name="Mardis E.R."/>
            <person name="Taylor J.W."/>
            <person name="McEwen J.G."/>
            <person name="Clay O.K."/>
            <person name="Klein B.S."/>
            <person name="Cuomo C.A."/>
        </authorList>
    </citation>
    <scope>NUCLEOTIDE SEQUENCE [LARGE SCALE GENOMIC DNA]</scope>
    <source>
        <strain>SLH14081</strain>
    </source>
</reference>
<gene>
    <name type="primary">LCL2</name>
    <name type="ORF">BDBG_01276</name>
</gene>
<sequence length="121" mass="13217">MIHIITGTLLGLLFLATGARAQFQFFEQMFGGGQQQQESQEHNVPSDSSWYQRTYDNARCSDYLCPGTLACVSVPHHCPCQHPGVEDKFELGDGSAICVSKGGFKPGEAARKVELARKGLL</sequence>
<proteinExistence type="inferred from homology"/>
<name>LCL2_BLAGS</name>
<evidence type="ECO:0000250" key="1"/>
<evidence type="ECO:0000255" key="2"/>
<evidence type="ECO:0000305" key="3"/>
<protein>
    <recommendedName>
        <fullName>Long chronological lifespan protein 2</fullName>
    </recommendedName>
</protein>